<evidence type="ECO:0000255" key="1">
    <source>
        <dbReference type="HAMAP-Rule" id="MF_01850"/>
    </source>
</evidence>
<sequence>MSHSANFYRLETRLQSLTGKAIGDFGMIEDGDTVLVCMSGGKDSYTMLSVLTALQKRAPIQFKLIAMNLDQKQPGFPEHVLPAYLKSLGVEYVIVEADTYSIVKEKVPEGKTTCSLCSRLRRGVIYRTAKELGANKIALGHHRDDIVNTFFLNMFFGGKMKAMPPKLATDDGQHIVIRPLAYCAEKDIASYARAMAFPIIPCNLCGSQENLQRKKVSEMLQAWERENPGRIDNIFAALRNVVPSHLADTDLFPFTGLATGLAKIDEASLFGETTFTQQALTFTGNVEANRMEFVRFDKIQKVQEAPERASEPSA</sequence>
<accession>Q1LS06</accession>
<organism>
    <name type="scientific">Cupriavidus metallidurans (strain ATCC 43123 / DSM 2839 / NBRC 102507 / CH34)</name>
    <name type="common">Ralstonia metallidurans</name>
    <dbReference type="NCBI Taxonomy" id="266264"/>
    <lineage>
        <taxon>Bacteria</taxon>
        <taxon>Pseudomonadati</taxon>
        <taxon>Pseudomonadota</taxon>
        <taxon>Betaproteobacteria</taxon>
        <taxon>Burkholderiales</taxon>
        <taxon>Burkholderiaceae</taxon>
        <taxon>Cupriavidus</taxon>
    </lineage>
</organism>
<proteinExistence type="inferred from homology"/>
<reference key="1">
    <citation type="journal article" date="2010" name="PLoS ONE">
        <title>The complete genome sequence of Cupriavidus metallidurans strain CH34, a master survivalist in harsh and anthropogenic environments.</title>
        <authorList>
            <person name="Janssen P.J."/>
            <person name="Van Houdt R."/>
            <person name="Moors H."/>
            <person name="Monsieurs P."/>
            <person name="Morin N."/>
            <person name="Michaux A."/>
            <person name="Benotmane M.A."/>
            <person name="Leys N."/>
            <person name="Vallaeys T."/>
            <person name="Lapidus A."/>
            <person name="Monchy S."/>
            <person name="Medigue C."/>
            <person name="Taghavi S."/>
            <person name="McCorkle S."/>
            <person name="Dunn J."/>
            <person name="van der Lelie D."/>
            <person name="Mergeay M."/>
        </authorList>
    </citation>
    <scope>NUCLEOTIDE SEQUENCE [LARGE SCALE GENOMIC DNA]</scope>
    <source>
        <strain>ATCC 43123 / DSM 2839 / NBRC 102507 / CH34</strain>
    </source>
</reference>
<protein>
    <recommendedName>
        <fullName evidence="1">tRNA-cytidine(32) 2-sulfurtransferase</fullName>
        <ecNumber evidence="1">2.8.1.-</ecNumber>
    </recommendedName>
    <alternativeName>
        <fullName evidence="1">Two-thiocytidine biosynthesis protein A</fullName>
    </alternativeName>
    <alternativeName>
        <fullName evidence="1">tRNA 2-thiocytidine biosynthesis protein TtcA</fullName>
    </alternativeName>
</protein>
<dbReference type="EC" id="2.8.1.-" evidence="1"/>
<dbReference type="EMBL" id="CP000352">
    <property type="protein sequence ID" value="ABF07070.1"/>
    <property type="molecule type" value="Genomic_DNA"/>
</dbReference>
<dbReference type="RefSeq" id="WP_011515091.1">
    <property type="nucleotide sequence ID" value="NC_007973.1"/>
</dbReference>
<dbReference type="SMR" id="Q1LS06"/>
<dbReference type="STRING" id="266264.Rmet_0184"/>
<dbReference type="KEGG" id="rme:Rmet_0184"/>
<dbReference type="eggNOG" id="COG0037">
    <property type="taxonomic scope" value="Bacteria"/>
</dbReference>
<dbReference type="HOGENOM" id="CLU_026481_0_0_4"/>
<dbReference type="Proteomes" id="UP000002429">
    <property type="component" value="Chromosome"/>
</dbReference>
<dbReference type="GO" id="GO:0005737">
    <property type="term" value="C:cytoplasm"/>
    <property type="evidence" value="ECO:0007669"/>
    <property type="project" value="UniProtKB-SubCell"/>
</dbReference>
<dbReference type="GO" id="GO:0051539">
    <property type="term" value="F:4 iron, 4 sulfur cluster binding"/>
    <property type="evidence" value="ECO:0007669"/>
    <property type="project" value="UniProtKB-UniRule"/>
</dbReference>
<dbReference type="GO" id="GO:0005524">
    <property type="term" value="F:ATP binding"/>
    <property type="evidence" value="ECO:0007669"/>
    <property type="project" value="UniProtKB-UniRule"/>
</dbReference>
<dbReference type="GO" id="GO:0000287">
    <property type="term" value="F:magnesium ion binding"/>
    <property type="evidence" value="ECO:0007669"/>
    <property type="project" value="UniProtKB-UniRule"/>
</dbReference>
<dbReference type="GO" id="GO:0016783">
    <property type="term" value="F:sulfurtransferase activity"/>
    <property type="evidence" value="ECO:0007669"/>
    <property type="project" value="UniProtKB-UniRule"/>
</dbReference>
<dbReference type="GO" id="GO:0000049">
    <property type="term" value="F:tRNA binding"/>
    <property type="evidence" value="ECO:0007669"/>
    <property type="project" value="UniProtKB-KW"/>
</dbReference>
<dbReference type="GO" id="GO:0034227">
    <property type="term" value="P:tRNA thio-modification"/>
    <property type="evidence" value="ECO:0007669"/>
    <property type="project" value="UniProtKB-UniRule"/>
</dbReference>
<dbReference type="CDD" id="cd24138">
    <property type="entry name" value="TtcA-like"/>
    <property type="match status" value="1"/>
</dbReference>
<dbReference type="Gene3D" id="3.40.50.620">
    <property type="entry name" value="HUPs"/>
    <property type="match status" value="1"/>
</dbReference>
<dbReference type="HAMAP" id="MF_01850">
    <property type="entry name" value="TtcA"/>
    <property type="match status" value="1"/>
</dbReference>
<dbReference type="InterPro" id="IPR014729">
    <property type="entry name" value="Rossmann-like_a/b/a_fold"/>
</dbReference>
<dbReference type="InterPro" id="IPR011063">
    <property type="entry name" value="TilS/TtcA_N"/>
</dbReference>
<dbReference type="InterPro" id="IPR012089">
    <property type="entry name" value="tRNA_Cyd_32_2_STrfase"/>
</dbReference>
<dbReference type="NCBIfam" id="NF007972">
    <property type="entry name" value="PRK10696.1"/>
    <property type="match status" value="1"/>
</dbReference>
<dbReference type="PANTHER" id="PTHR43686:SF1">
    <property type="entry name" value="AMINOTRAN_5 DOMAIN-CONTAINING PROTEIN"/>
    <property type="match status" value="1"/>
</dbReference>
<dbReference type="PANTHER" id="PTHR43686">
    <property type="entry name" value="SULFURTRANSFERASE-RELATED"/>
    <property type="match status" value="1"/>
</dbReference>
<dbReference type="Pfam" id="PF01171">
    <property type="entry name" value="ATP_bind_3"/>
    <property type="match status" value="1"/>
</dbReference>
<dbReference type="SUPFAM" id="SSF52402">
    <property type="entry name" value="Adenine nucleotide alpha hydrolases-like"/>
    <property type="match status" value="1"/>
</dbReference>
<feature type="chain" id="PRO_0000348812" description="tRNA-cytidine(32) 2-sulfurtransferase">
    <location>
        <begin position="1"/>
        <end position="314"/>
    </location>
</feature>
<feature type="short sequence motif" description="PP-loop motif" evidence="1">
    <location>
        <begin position="39"/>
        <end position="44"/>
    </location>
</feature>
<feature type="binding site" evidence="1">
    <location>
        <position position="114"/>
    </location>
    <ligand>
        <name>[4Fe-4S] cluster</name>
        <dbReference type="ChEBI" id="CHEBI:49883"/>
    </ligand>
</feature>
<feature type="binding site" evidence="1">
    <location>
        <position position="117"/>
    </location>
    <ligand>
        <name>[4Fe-4S] cluster</name>
        <dbReference type="ChEBI" id="CHEBI:49883"/>
    </ligand>
</feature>
<feature type="binding site" evidence="1">
    <location>
        <position position="205"/>
    </location>
    <ligand>
        <name>[4Fe-4S] cluster</name>
        <dbReference type="ChEBI" id="CHEBI:49883"/>
    </ligand>
</feature>
<comment type="function">
    <text evidence="1">Catalyzes the ATP-dependent 2-thiolation of cytidine in position 32 of tRNA, to form 2-thiocytidine (s(2)C32). The sulfur atoms are provided by the cysteine/cysteine desulfurase (IscS) system.</text>
</comment>
<comment type="catalytic activity">
    <reaction evidence="1">
        <text>cytidine(32) in tRNA + S-sulfanyl-L-cysteinyl-[cysteine desulfurase] + AH2 + ATP = 2-thiocytidine(32) in tRNA + L-cysteinyl-[cysteine desulfurase] + A + AMP + diphosphate + H(+)</text>
        <dbReference type="Rhea" id="RHEA:57048"/>
        <dbReference type="Rhea" id="RHEA-COMP:10288"/>
        <dbReference type="Rhea" id="RHEA-COMP:12157"/>
        <dbReference type="Rhea" id="RHEA-COMP:12158"/>
        <dbReference type="Rhea" id="RHEA-COMP:14821"/>
        <dbReference type="ChEBI" id="CHEBI:13193"/>
        <dbReference type="ChEBI" id="CHEBI:15378"/>
        <dbReference type="ChEBI" id="CHEBI:17499"/>
        <dbReference type="ChEBI" id="CHEBI:29950"/>
        <dbReference type="ChEBI" id="CHEBI:30616"/>
        <dbReference type="ChEBI" id="CHEBI:33019"/>
        <dbReference type="ChEBI" id="CHEBI:61963"/>
        <dbReference type="ChEBI" id="CHEBI:82748"/>
        <dbReference type="ChEBI" id="CHEBI:141453"/>
        <dbReference type="ChEBI" id="CHEBI:456215"/>
    </reaction>
    <physiologicalReaction direction="left-to-right" evidence="1">
        <dbReference type="Rhea" id="RHEA:57049"/>
    </physiologicalReaction>
</comment>
<comment type="cofactor">
    <cofactor evidence="1">
        <name>Mg(2+)</name>
        <dbReference type="ChEBI" id="CHEBI:18420"/>
    </cofactor>
</comment>
<comment type="cofactor">
    <cofactor evidence="1">
        <name>[4Fe-4S] cluster</name>
        <dbReference type="ChEBI" id="CHEBI:49883"/>
    </cofactor>
    <text evidence="1">Binds 1 [4Fe-4S] cluster per subunit. The cluster is chelated by three Cys residues, the fourth Fe has a free coordination site that may bind a sulfur atom transferred from the persulfide of IscS.</text>
</comment>
<comment type="pathway">
    <text evidence="1">tRNA modification.</text>
</comment>
<comment type="subunit">
    <text evidence="1">Homodimer.</text>
</comment>
<comment type="subcellular location">
    <subcellularLocation>
        <location evidence="1">Cytoplasm</location>
    </subcellularLocation>
</comment>
<comment type="miscellaneous">
    <text evidence="1">The thiolation reaction likely consists of two steps: a first activation step by ATP to form an adenylated intermediate of the target base of tRNA, and a second nucleophilic substitution step of the sulfur (S) atom supplied by the hydrosulfide attached to the Fe-S cluster.</text>
</comment>
<comment type="similarity">
    <text evidence="1">Belongs to the TtcA family.</text>
</comment>
<gene>
    <name evidence="1" type="primary">ttcA</name>
    <name type="ordered locus">Rmet_0184</name>
</gene>
<name>TTCA_CUPMC</name>
<keyword id="KW-0004">4Fe-4S</keyword>
<keyword id="KW-0067">ATP-binding</keyword>
<keyword id="KW-0963">Cytoplasm</keyword>
<keyword id="KW-0408">Iron</keyword>
<keyword id="KW-0411">Iron-sulfur</keyword>
<keyword id="KW-0460">Magnesium</keyword>
<keyword id="KW-0479">Metal-binding</keyword>
<keyword id="KW-0547">Nucleotide-binding</keyword>
<keyword id="KW-1185">Reference proteome</keyword>
<keyword id="KW-0694">RNA-binding</keyword>
<keyword id="KW-0808">Transferase</keyword>
<keyword id="KW-0819">tRNA processing</keyword>
<keyword id="KW-0820">tRNA-binding</keyword>